<keyword id="KW-0052">Apoplast</keyword>
<keyword id="KW-0134">Cell wall</keyword>
<keyword id="KW-0961">Cell wall biogenesis/degradation</keyword>
<keyword id="KW-0903">Direct protein sequencing</keyword>
<keyword id="KW-1015">Disulfide bond</keyword>
<keyword id="KW-0325">Glycoprotein</keyword>
<keyword id="KW-0326">Glycosidase</keyword>
<keyword id="KW-0378">Hydrolase</keyword>
<keyword id="KW-0964">Secreted</keyword>
<keyword id="KW-0732">Signal</keyword>
<keyword id="KW-0808">Transferase</keyword>
<comment type="function">
    <text>Catalyzes xyloglucan endohydrolysis (XEH) and/or endotransglycosylation (XET). Cleaves and religates xyloglucan polymers, an essential constituent of the primary cell wall, and thereby participates in cell wall construction of growing tissues.</text>
</comment>
<comment type="catalytic activity">
    <reaction evidence="7">
        <text>breaks a beta-(1-&gt;4) bond in the backbone of a xyloglucan and transfers the xyloglucanyl segment on to O-4 of the non-reducing terminal glucose residue of an acceptor, which can be a xyloglucan or an oligosaccharide of xyloglucan.</text>
        <dbReference type="EC" id="2.4.1.207"/>
    </reaction>
</comment>
<comment type="subcellular location">
    <subcellularLocation>
        <location evidence="9">Secreted</location>
        <location evidence="9">Cell wall</location>
    </subcellularLocation>
    <subcellularLocation>
        <location evidence="9">Secreted</location>
        <location evidence="9">Extracellular space</location>
        <location evidence="9">Apoplast</location>
    </subcellularLocation>
</comment>
<comment type="tissue specificity">
    <text evidence="6">Predominantly expressed in the phloem fibers of growing internodes. Expressed in xylem cells in the basal part of the internode. In the internode, it is expressed closer to the top of the internode compared to XTHB.</text>
</comment>
<comment type="induction">
    <text evidence="6">Up-regulated by indole-3-acetic acid (IAA) and fusicoccin. Effect of IAA is however nullified in 0.25 M mannitol, which prevents cell expansion without affecting auxin action per se.</text>
</comment>
<comment type="PTM">
    <text evidence="1">Contains at least one intrachain disulfide bond essential for its enzymatic activity.</text>
</comment>
<comment type="similarity">
    <text evidence="9">Belongs to the glycosyl hydrolase 16 family. XTH group 1 subfamily.</text>
</comment>
<organism>
    <name type="scientific">Phaseolus angularis</name>
    <name type="common">Azuki bean</name>
    <name type="synonym">Vigna angularis</name>
    <dbReference type="NCBI Taxonomy" id="3914"/>
    <lineage>
        <taxon>Eukaryota</taxon>
        <taxon>Viridiplantae</taxon>
        <taxon>Streptophyta</taxon>
        <taxon>Embryophyta</taxon>
        <taxon>Tracheophyta</taxon>
        <taxon>Spermatophyta</taxon>
        <taxon>Magnoliopsida</taxon>
        <taxon>eudicotyledons</taxon>
        <taxon>Gunneridae</taxon>
        <taxon>Pentapetalae</taxon>
        <taxon>rosids</taxon>
        <taxon>fabids</taxon>
        <taxon>Fabales</taxon>
        <taxon>Fabaceae</taxon>
        <taxon>Papilionoideae</taxon>
        <taxon>50 kb inversion clade</taxon>
        <taxon>NPAAA clade</taxon>
        <taxon>indigoferoid/millettioid clade</taxon>
        <taxon>Phaseoleae</taxon>
        <taxon>Vigna</taxon>
    </lineage>
</organism>
<reference key="1">
    <citation type="journal article" date="1993" name="J. Biol. Chem.">
        <title>Molecular cloning and cDNA sequencing of endoxyloglucan transferase, a novel class of glycosyltransferase that mediates molecular grafting between matrix polysaccharides in plant cell walls.</title>
        <authorList>
            <person name="Okazawa K."/>
            <person name="Sato Y."/>
            <person name="Nakagawa T."/>
            <person name="Asada K."/>
            <person name="Kato I."/>
            <person name="Tomita E."/>
            <person name="Nishitani K."/>
        </authorList>
    </citation>
    <scope>NUCLEOTIDE SEQUENCE [MRNA]</scope>
    <scope>PROTEIN SEQUENCE OF 21-50</scope>
    <source>
        <strain>cv. Takara Wase</strain>
    </source>
</reference>
<reference key="2">
    <citation type="journal article" date="2003" name="Plant Cell Physiol.">
        <title>Two azuki bean XTH genes, VaXTH1 and VaXTH2, with similar tissue-specific expression profiles, are differently regulated by auxin.</title>
        <authorList>
            <person name="Nakamura T."/>
            <person name="Yokoyama R."/>
            <person name="Tomita E."/>
            <person name="Nishitani K."/>
        </authorList>
    </citation>
    <scope>NUCLEOTIDE SEQUENCE [GENOMIC DNA]</scope>
    <scope>TISSUE SPECIFICITY</scope>
    <scope>INDUCTION</scope>
    <source>
        <strain>cv. Takara Wase</strain>
    </source>
</reference>
<reference key="3">
    <citation type="journal article" date="1992" name="J. Biol. Chem.">
        <title>Endo-xyloglucan transferase, a novel class of glycosyltransferase that catalyzes transfer of a segment of xyloglucan molecule to another xyloglucan molecule.</title>
        <authorList>
            <person name="Nishitani K."/>
            <person name="Tominaga R."/>
        </authorList>
    </citation>
    <scope>IDENTIFICATION</scope>
    <scope>ENZYME ACTIVITY</scope>
    <source>
        <strain>cv. Takara Wase</strain>
    </source>
</reference>
<feature type="signal peptide" evidence="8">
    <location>
        <begin position="1"/>
        <end position="20"/>
    </location>
</feature>
<feature type="chain" id="PRO_0000011837" description="Xyloglucan endotransglucosylase/hydrolase protein A">
    <location>
        <begin position="21"/>
        <end position="292"/>
    </location>
</feature>
<feature type="domain" description="GH16" evidence="4">
    <location>
        <begin position="21"/>
        <end position="219"/>
    </location>
</feature>
<feature type="active site" description="Nucleophile" evidence="5">
    <location>
        <position position="105"/>
    </location>
</feature>
<feature type="active site" description="Proton donor" evidence="5">
    <location>
        <position position="109"/>
    </location>
</feature>
<feature type="binding site" evidence="2">
    <location>
        <position position="109"/>
    </location>
    <ligand>
        <name>xyloglucan</name>
        <dbReference type="ChEBI" id="CHEBI:18233"/>
    </ligand>
</feature>
<feature type="binding site" evidence="2">
    <location>
        <begin position="122"/>
        <end position="124"/>
    </location>
    <ligand>
        <name>xyloglucan</name>
        <dbReference type="ChEBI" id="CHEBI:18233"/>
    </ligand>
</feature>
<feature type="binding site" evidence="2">
    <location>
        <begin position="132"/>
        <end position="134"/>
    </location>
    <ligand>
        <name>xyloglucan</name>
        <dbReference type="ChEBI" id="CHEBI:18233"/>
    </ligand>
</feature>
<feature type="binding site" evidence="2">
    <location>
        <begin position="198"/>
        <end position="199"/>
    </location>
    <ligand>
        <name>xyloglucan</name>
        <dbReference type="ChEBI" id="CHEBI:18233"/>
    </ligand>
</feature>
<feature type="binding site" evidence="2">
    <location>
        <position position="203"/>
    </location>
    <ligand>
        <name>xyloglucan</name>
        <dbReference type="ChEBI" id="CHEBI:18233"/>
    </ligand>
</feature>
<feature type="binding site" evidence="2">
    <location>
        <position position="278"/>
    </location>
    <ligand>
        <name>xyloglucan</name>
        <dbReference type="ChEBI" id="CHEBI:18233"/>
    </ligand>
</feature>
<feature type="site" description="Important for catalytic activity" evidence="2">
    <location>
        <position position="107"/>
    </location>
</feature>
<feature type="glycosylation site" description="N-linked (GlcNAc...) asparagine" evidence="3">
    <location>
        <position position="113"/>
    </location>
</feature>
<feature type="disulfide bond" evidence="2">
    <location>
        <begin position="227"/>
        <end position="236"/>
    </location>
</feature>
<feature type="disulfide bond" evidence="2">
    <location>
        <begin position="273"/>
        <end position="286"/>
    </location>
</feature>
<evidence type="ECO:0000250" key="1"/>
<evidence type="ECO:0000250" key="2">
    <source>
        <dbReference type="UniProtKB" id="Q8GZD5"/>
    </source>
</evidence>
<evidence type="ECO:0000255" key="3"/>
<evidence type="ECO:0000255" key="4">
    <source>
        <dbReference type="PROSITE-ProRule" id="PRU01098"/>
    </source>
</evidence>
<evidence type="ECO:0000255" key="5">
    <source>
        <dbReference type="PROSITE-ProRule" id="PRU10064"/>
    </source>
</evidence>
<evidence type="ECO:0000269" key="6">
    <source>
    </source>
</evidence>
<evidence type="ECO:0000269" key="7">
    <source>
    </source>
</evidence>
<evidence type="ECO:0000269" key="8">
    <source>
    </source>
</evidence>
<evidence type="ECO:0000305" key="9"/>
<accession>Q41638</accession>
<sequence>MGSSLWTCLILLSLASASFAANPRTPIDVPFGRNYVPTWAFDHIKYLNGGSEIQLHLDKYTGTGFQSKGSYLFGHFSMYIKLVPGDSAGTVTAFYLSSTNAEHDEIDFEFLGNRTGQPYILQTNVFTGGKGDREQRIYLWFDPTTQYHRYSVLWNMYQIVFYVDDYPIRVFKNSNDLGVKFPFNQPMKIYNSLWNADDWATRGGLEKTDWSKAPFIASYKGFHIDGCEASVNAKFCDTQGKRWWDQPEFRDLDAAQWQKLAWVRNKYTIYNYCTDRKRYSQVPPECTRDRDI</sequence>
<protein>
    <recommendedName>
        <fullName>Xyloglucan endotransglucosylase/hydrolase protein A</fullName>
        <ecNumber>2.4.1.207</ecNumber>
    </recommendedName>
    <alternativeName>
        <fullName>VaXTH1</fullName>
    </alternativeName>
</protein>
<name>XTHA_PHAAN</name>
<dbReference type="EC" id="2.4.1.207"/>
<dbReference type="EMBL" id="D16458">
    <property type="protein sequence ID" value="BAA03925.1"/>
    <property type="molecule type" value="mRNA"/>
</dbReference>
<dbReference type="EMBL" id="AB086395">
    <property type="protein sequence ID" value="BAC03237.1"/>
    <property type="molecule type" value="Genomic_DNA"/>
</dbReference>
<dbReference type="PIR" id="A49539">
    <property type="entry name" value="A49539"/>
</dbReference>
<dbReference type="RefSeq" id="NP_001316764.1">
    <property type="nucleotide sequence ID" value="NM_001329835.1"/>
</dbReference>
<dbReference type="SMR" id="Q41638"/>
<dbReference type="CAZy" id="GH16">
    <property type="family name" value="Glycoside Hydrolase Family 16"/>
</dbReference>
<dbReference type="GlyCosmos" id="Q41638">
    <property type="glycosylation" value="1 site, No reported glycans"/>
</dbReference>
<dbReference type="GeneID" id="108344638"/>
<dbReference type="KEGG" id="var:108344638"/>
<dbReference type="OrthoDB" id="4781at2759"/>
<dbReference type="GO" id="GO:0048046">
    <property type="term" value="C:apoplast"/>
    <property type="evidence" value="ECO:0007669"/>
    <property type="project" value="UniProtKB-SubCell"/>
</dbReference>
<dbReference type="GO" id="GO:0004553">
    <property type="term" value="F:hydrolase activity, hydrolyzing O-glycosyl compounds"/>
    <property type="evidence" value="ECO:0007669"/>
    <property type="project" value="InterPro"/>
</dbReference>
<dbReference type="GO" id="GO:0030247">
    <property type="term" value="F:polysaccharide binding"/>
    <property type="evidence" value="ECO:0000250"/>
    <property type="project" value="UniProtKB"/>
</dbReference>
<dbReference type="GO" id="GO:0016762">
    <property type="term" value="F:xyloglucan:xyloglucosyl transferase activity"/>
    <property type="evidence" value="ECO:0007669"/>
    <property type="project" value="UniProtKB-EC"/>
</dbReference>
<dbReference type="GO" id="GO:0042546">
    <property type="term" value="P:cell wall biogenesis"/>
    <property type="evidence" value="ECO:0007669"/>
    <property type="project" value="InterPro"/>
</dbReference>
<dbReference type="GO" id="GO:0071555">
    <property type="term" value="P:cell wall organization"/>
    <property type="evidence" value="ECO:0007669"/>
    <property type="project" value="UniProtKB-KW"/>
</dbReference>
<dbReference type="GO" id="GO:0010411">
    <property type="term" value="P:xyloglucan metabolic process"/>
    <property type="evidence" value="ECO:0007669"/>
    <property type="project" value="InterPro"/>
</dbReference>
<dbReference type="CDD" id="cd02176">
    <property type="entry name" value="GH16_XET"/>
    <property type="match status" value="1"/>
</dbReference>
<dbReference type="FunFam" id="2.60.120.200:FF:000025">
    <property type="entry name" value="Xyloglucan endotransglucosylase/hydrolase"/>
    <property type="match status" value="1"/>
</dbReference>
<dbReference type="Gene3D" id="2.60.120.200">
    <property type="match status" value="1"/>
</dbReference>
<dbReference type="InterPro" id="IPR044791">
    <property type="entry name" value="Beta-glucanase/XTH"/>
</dbReference>
<dbReference type="InterPro" id="IPR013320">
    <property type="entry name" value="ConA-like_dom_sf"/>
</dbReference>
<dbReference type="InterPro" id="IPR000757">
    <property type="entry name" value="GH16"/>
</dbReference>
<dbReference type="InterPro" id="IPR008263">
    <property type="entry name" value="GH16_AS"/>
</dbReference>
<dbReference type="InterPro" id="IPR010713">
    <property type="entry name" value="XET_C"/>
</dbReference>
<dbReference type="InterPro" id="IPR016455">
    <property type="entry name" value="XTH"/>
</dbReference>
<dbReference type="PANTHER" id="PTHR31062">
    <property type="entry name" value="XYLOGLUCAN ENDOTRANSGLUCOSYLASE/HYDROLASE PROTEIN 8-RELATED"/>
    <property type="match status" value="1"/>
</dbReference>
<dbReference type="Pfam" id="PF00722">
    <property type="entry name" value="Glyco_hydro_16"/>
    <property type="match status" value="1"/>
</dbReference>
<dbReference type="Pfam" id="PF06955">
    <property type="entry name" value="XET_C"/>
    <property type="match status" value="1"/>
</dbReference>
<dbReference type="PIRSF" id="PIRSF005604">
    <property type="entry name" value="XET"/>
    <property type="match status" value="1"/>
</dbReference>
<dbReference type="SUPFAM" id="SSF49899">
    <property type="entry name" value="Concanavalin A-like lectins/glucanases"/>
    <property type="match status" value="1"/>
</dbReference>
<dbReference type="PROSITE" id="PS01034">
    <property type="entry name" value="GH16_1"/>
    <property type="match status" value="1"/>
</dbReference>
<dbReference type="PROSITE" id="PS51762">
    <property type="entry name" value="GH16_2"/>
    <property type="match status" value="1"/>
</dbReference>
<gene>
    <name type="primary">XTHA</name>
    <name type="synonym">EXT</name>
    <name type="synonym">XTH1</name>
</gene>
<proteinExistence type="evidence at protein level"/>